<comment type="function">
    <text evidence="2 4">Catalyzes the NAD-dependent dehydrogenation (oxidation) of a broad array of hydroxylated polyunsaturated fatty acids (mainly eicosanoids and docosanoids, including prostaglandins, lipoxins and resolvins), yielding their corresponding keto (oxo) metabolites (By similarity) (PubMed:9099857). Decreases the levels of the pro-proliferative prostaglandins such as prostaglandin E2 (whose activity is increased in cancer because of an increase in the expression of cyclooxygenase 2) and generates oxo-fatty acid products that can profoundly influence cell function by abrogating pro-inflammatory cytokine expression. Converts resolvins E1, D1 and D2 to their oxo products, which represents a mode of resolvin inactivation. Resolvin E1 plays important roles during the resolution phase of acute inflammation, while resolvins D1 and D2 have a unique role in obesity-induced adipose inflammation (By similarity).</text>
</comment>
<comment type="catalytic activity">
    <reaction evidence="6">
        <text>prostaglandin E2 + NAD(+) = 15-oxoprostaglandin E2 + NADH + H(+)</text>
        <dbReference type="Rhea" id="RHEA:11876"/>
        <dbReference type="ChEBI" id="CHEBI:15378"/>
        <dbReference type="ChEBI" id="CHEBI:57400"/>
        <dbReference type="ChEBI" id="CHEBI:57540"/>
        <dbReference type="ChEBI" id="CHEBI:57945"/>
        <dbReference type="ChEBI" id="CHEBI:606564"/>
        <dbReference type="EC" id="1.1.1.141"/>
    </reaction>
    <physiologicalReaction direction="left-to-right" evidence="6">
        <dbReference type="Rhea" id="RHEA:11877"/>
    </physiologicalReaction>
</comment>
<comment type="catalytic activity">
    <reaction evidence="2">
        <text>(15S)-hydroxy-(5Z,8Z,11Z,13E)-eicosatetraenoate + NAD(+) = 15-oxo-(5Z,8Z,11Z,13E)-eicosatetraenoate + NADH + H(+)</text>
        <dbReference type="Rhea" id="RHEA:23260"/>
        <dbReference type="ChEBI" id="CHEBI:15378"/>
        <dbReference type="ChEBI" id="CHEBI:57409"/>
        <dbReference type="ChEBI" id="CHEBI:57410"/>
        <dbReference type="ChEBI" id="CHEBI:57540"/>
        <dbReference type="ChEBI" id="CHEBI:57945"/>
        <dbReference type="EC" id="1.1.1.232"/>
    </reaction>
    <physiologicalReaction direction="left-to-right" evidence="2">
        <dbReference type="Rhea" id="RHEA:23261"/>
    </physiologicalReaction>
</comment>
<comment type="catalytic activity">
    <reaction evidence="2">
        <text>(11R)-hydroxy-(5Z,8Z,12E,14Z)-eicosatetraenoate + NAD(+) = 11-oxo-(5Z,8Z,12E,14Z)-eicosatetraenoate + NADH + H(+)</text>
        <dbReference type="Rhea" id="RHEA:48640"/>
        <dbReference type="ChEBI" id="CHEBI:15378"/>
        <dbReference type="ChEBI" id="CHEBI:57540"/>
        <dbReference type="ChEBI" id="CHEBI:57945"/>
        <dbReference type="ChEBI" id="CHEBI:78836"/>
        <dbReference type="ChEBI" id="CHEBI:90697"/>
    </reaction>
    <physiologicalReaction direction="left-to-right" evidence="2">
        <dbReference type="Rhea" id="RHEA:48641"/>
    </physiologicalReaction>
</comment>
<comment type="catalytic activity">
    <reaction evidence="2">
        <text>lipoxin A4 + NAD(+) = 15-oxo-(5S,6R)-dihydroxy-(7E,9E,11Z,13E)-eicosatetraenoate + NADH + H(+)</text>
        <dbReference type="Rhea" id="RHEA:41572"/>
        <dbReference type="ChEBI" id="CHEBI:15378"/>
        <dbReference type="ChEBI" id="CHEBI:57540"/>
        <dbReference type="ChEBI" id="CHEBI:57945"/>
        <dbReference type="ChEBI" id="CHEBI:67026"/>
        <dbReference type="ChEBI" id="CHEBI:78311"/>
    </reaction>
    <physiologicalReaction direction="left-to-right" evidence="2">
        <dbReference type="Rhea" id="RHEA:41573"/>
    </physiologicalReaction>
</comment>
<comment type="catalytic activity">
    <reaction evidence="2">
        <text>15-oxo-(5S,6R)-dihydroxy-(7E,9E,11Z)-eicosatrienoate + NADH + H(+) = (5S,6R,15S)-trihydroxy-(7E,9E,11Z)-eicosatrienoate + NAD(+)</text>
        <dbReference type="Rhea" id="RHEA:41596"/>
        <dbReference type="ChEBI" id="CHEBI:15378"/>
        <dbReference type="ChEBI" id="CHEBI:57540"/>
        <dbReference type="ChEBI" id="CHEBI:57945"/>
        <dbReference type="ChEBI" id="CHEBI:78325"/>
        <dbReference type="ChEBI" id="CHEBI:78329"/>
    </reaction>
    <physiologicalReaction direction="left-to-right" evidence="2">
        <dbReference type="Rhea" id="RHEA:41597"/>
    </physiologicalReaction>
</comment>
<comment type="catalytic activity">
    <reaction evidence="2">
        <text>prostaglandin A1 + NAD(+) = 15-oxo-prostaglandin A1 + NADH + H(+)</text>
        <dbReference type="Rhea" id="RHEA:41263"/>
        <dbReference type="ChEBI" id="CHEBI:15378"/>
        <dbReference type="ChEBI" id="CHEBI:57398"/>
        <dbReference type="ChEBI" id="CHEBI:57540"/>
        <dbReference type="ChEBI" id="CHEBI:57945"/>
        <dbReference type="ChEBI" id="CHEBI:85072"/>
    </reaction>
    <physiologicalReaction direction="left-to-right" evidence="2">
        <dbReference type="Rhea" id="RHEA:41264"/>
    </physiologicalReaction>
</comment>
<comment type="catalytic activity">
    <reaction evidence="2">
        <text>prostaglandin E1 + NAD(+) = 15-oxoprostaglandin E1 + NADH + H(+)</text>
        <dbReference type="Rhea" id="RHEA:16477"/>
        <dbReference type="ChEBI" id="CHEBI:15378"/>
        <dbReference type="ChEBI" id="CHEBI:57397"/>
        <dbReference type="ChEBI" id="CHEBI:57401"/>
        <dbReference type="ChEBI" id="CHEBI:57540"/>
        <dbReference type="ChEBI" id="CHEBI:57945"/>
    </reaction>
    <physiologicalReaction direction="left-to-right" evidence="2">
        <dbReference type="Rhea" id="RHEA:16478"/>
    </physiologicalReaction>
</comment>
<comment type="catalytic activity">
    <reaction evidence="2">
        <text>14-hydroxy-(4Z,7Z,10Z,12E,16Z,19Z)-docosahexaenoate + NAD(+) = 14-oxo-(4Z,7Z,10Z,12E,16Z,19Z)-docosahexaenoate + NADH + H(+)</text>
        <dbReference type="Rhea" id="RHEA:48952"/>
        <dbReference type="ChEBI" id="CHEBI:15378"/>
        <dbReference type="ChEBI" id="CHEBI:57540"/>
        <dbReference type="ChEBI" id="CHEBI:57945"/>
        <dbReference type="ChEBI" id="CHEBI:90866"/>
        <dbReference type="ChEBI" id="CHEBI:90867"/>
    </reaction>
    <physiologicalReaction direction="left-to-right" evidence="2">
        <dbReference type="Rhea" id="RHEA:48953"/>
    </physiologicalReaction>
</comment>
<comment type="catalytic activity">
    <reaction evidence="2">
        <text>resolvin E1 + NAD(+) = 18-oxo-resolvin E1 + NADH + H(+)</text>
        <dbReference type="Rhea" id="RHEA:49244"/>
        <dbReference type="ChEBI" id="CHEBI:15378"/>
        <dbReference type="ChEBI" id="CHEBI:57540"/>
        <dbReference type="ChEBI" id="CHEBI:57945"/>
        <dbReference type="ChEBI" id="CHEBI:91000"/>
        <dbReference type="ChEBI" id="CHEBI:91001"/>
    </reaction>
    <physiologicalReaction direction="left-to-right" evidence="2">
        <dbReference type="Rhea" id="RHEA:49245"/>
    </physiologicalReaction>
</comment>
<comment type="catalytic activity">
    <reaction evidence="2">
        <text>resolvin D1 + NAD(+) = 8-oxoresolvin D1 + NADH + H(+)</text>
        <dbReference type="Rhea" id="RHEA:50124"/>
        <dbReference type="ChEBI" id="CHEBI:15378"/>
        <dbReference type="ChEBI" id="CHEBI:57540"/>
        <dbReference type="ChEBI" id="CHEBI:57945"/>
        <dbReference type="ChEBI" id="CHEBI:132079"/>
        <dbReference type="ChEBI" id="CHEBI:132080"/>
    </reaction>
    <physiologicalReaction direction="left-to-right" evidence="2">
        <dbReference type="Rhea" id="RHEA:50125"/>
    </physiologicalReaction>
</comment>
<comment type="catalytic activity">
    <reaction evidence="2">
        <text>resolvin D1 + NAD(+) = 17-oxoresolvin D1 + NADH + H(+)</text>
        <dbReference type="Rhea" id="RHEA:50128"/>
        <dbReference type="ChEBI" id="CHEBI:15378"/>
        <dbReference type="ChEBI" id="CHEBI:57540"/>
        <dbReference type="ChEBI" id="CHEBI:57945"/>
        <dbReference type="ChEBI" id="CHEBI:132079"/>
        <dbReference type="ChEBI" id="CHEBI:132081"/>
    </reaction>
    <physiologicalReaction direction="left-to-right" evidence="2">
        <dbReference type="Rhea" id="RHEA:50129"/>
    </physiologicalReaction>
</comment>
<comment type="catalytic activity">
    <reaction evidence="2">
        <text>resolvin D2 + NAD(+) = 7-oxoresolvin D2 + NADH + H(+)</text>
        <dbReference type="Rhea" id="RHEA:53584"/>
        <dbReference type="ChEBI" id="CHEBI:15378"/>
        <dbReference type="ChEBI" id="CHEBI:57540"/>
        <dbReference type="ChEBI" id="CHEBI:57945"/>
        <dbReference type="ChEBI" id="CHEBI:133367"/>
        <dbReference type="ChEBI" id="CHEBI:137497"/>
    </reaction>
    <physiologicalReaction direction="left-to-right" evidence="2">
        <dbReference type="Rhea" id="RHEA:53585"/>
    </physiologicalReaction>
</comment>
<comment type="catalytic activity">
    <reaction evidence="2">
        <text>resolvin D2 + NAD(+) = 16-oxoresolvin D2 + NADH + H(+)</text>
        <dbReference type="Rhea" id="RHEA:53588"/>
        <dbReference type="ChEBI" id="CHEBI:15378"/>
        <dbReference type="ChEBI" id="CHEBI:57540"/>
        <dbReference type="ChEBI" id="CHEBI:57945"/>
        <dbReference type="ChEBI" id="CHEBI:133367"/>
        <dbReference type="ChEBI" id="CHEBI:137498"/>
    </reaction>
    <physiologicalReaction direction="left-to-right" evidence="2">
        <dbReference type="Rhea" id="RHEA:53589"/>
    </physiologicalReaction>
</comment>
<comment type="subunit">
    <text evidence="1">Homodimer.</text>
</comment>
<comment type="subcellular location">
    <subcellularLocation>
        <location evidence="1">Cytoplasm</location>
    </subcellularLocation>
</comment>
<comment type="similarity">
    <text evidence="5">Belongs to the short-chain dehydrogenases/reductases (SDR) family.</text>
</comment>
<accession>O08699</accession>
<accession>Q6P687</accession>
<name>PGDH_RAT</name>
<organism>
    <name type="scientific">Rattus norvegicus</name>
    <name type="common">Rat</name>
    <dbReference type="NCBI Taxonomy" id="10116"/>
    <lineage>
        <taxon>Eukaryota</taxon>
        <taxon>Metazoa</taxon>
        <taxon>Chordata</taxon>
        <taxon>Craniata</taxon>
        <taxon>Vertebrata</taxon>
        <taxon>Euteleostomi</taxon>
        <taxon>Mammalia</taxon>
        <taxon>Eutheria</taxon>
        <taxon>Euarchontoglires</taxon>
        <taxon>Glires</taxon>
        <taxon>Rodentia</taxon>
        <taxon>Myomorpha</taxon>
        <taxon>Muroidea</taxon>
        <taxon>Muridae</taxon>
        <taxon>Murinae</taxon>
        <taxon>Rattus</taxon>
    </lineage>
</organism>
<sequence length="266" mass="28939">MHVNGKVALVTGAAQGIGKAFTEALLLHGAKVALVDWNLETGVKCKAALDEQFEPQKTLFIQCDVADQKQLRDTFRKVVDHFGRLDILVNNAGVNNEKNWEQTLQINLVSVISGTYLGLDYMSKQNGGEGGIIINISSIAGLMPVAQQPVYCASKHGIIGFTRSAAMAANLMKSGVRLNVICPGFVKTPILESIEKEENMGQYIEYTDQIKAMMKFYGILDPSAIANGLINLIEDDALNGAIMKITASKGIHFQDYDLFPSFSKAP</sequence>
<evidence type="ECO:0000250" key="1"/>
<evidence type="ECO:0000250" key="2">
    <source>
        <dbReference type="UniProtKB" id="P15428"/>
    </source>
</evidence>
<evidence type="ECO:0000255" key="3">
    <source>
        <dbReference type="PROSITE-ProRule" id="PRU10001"/>
    </source>
</evidence>
<evidence type="ECO:0000269" key="4">
    <source>
    </source>
</evidence>
<evidence type="ECO:0000305" key="5"/>
<evidence type="ECO:0000305" key="6">
    <source>
    </source>
</evidence>
<gene>
    <name type="primary">Hpgd</name>
    <name type="synonym">Pgdh1</name>
</gene>
<keyword id="KW-0963">Cytoplasm</keyword>
<keyword id="KW-0276">Fatty acid metabolism</keyword>
<keyword id="KW-0443">Lipid metabolism</keyword>
<keyword id="KW-0520">NAD</keyword>
<keyword id="KW-0560">Oxidoreductase</keyword>
<keyword id="KW-0644">Prostaglandin metabolism</keyword>
<keyword id="KW-1185">Reference proteome</keyword>
<keyword id="KW-0043">Tumor suppressor</keyword>
<feature type="chain" id="PRO_0000253627" description="15-hydroxyprostaglandin dehydrogenase [NAD(+)]">
    <location>
        <begin position="1"/>
        <end position="266"/>
    </location>
</feature>
<feature type="active site" description="Proton acceptor" evidence="3">
    <location>
        <position position="151"/>
    </location>
</feature>
<feature type="binding site" evidence="1">
    <location>
        <begin position="12"/>
        <end position="20"/>
    </location>
    <ligand>
        <name>NAD(+)</name>
        <dbReference type="ChEBI" id="CHEBI:57540"/>
    </ligand>
</feature>
<feature type="binding site" evidence="1">
    <location>
        <begin position="36"/>
        <end position="37"/>
    </location>
    <ligand>
        <name>NAD(+)</name>
        <dbReference type="ChEBI" id="CHEBI:57540"/>
    </ligand>
</feature>
<feature type="binding site" evidence="1">
    <location>
        <begin position="63"/>
        <end position="65"/>
    </location>
    <ligand>
        <name>NAD(+)</name>
        <dbReference type="ChEBI" id="CHEBI:57540"/>
    </ligand>
</feature>
<feature type="binding site" evidence="1">
    <location>
        <position position="91"/>
    </location>
    <ligand>
        <name>NAD(+)</name>
        <dbReference type="ChEBI" id="CHEBI:57540"/>
    </ligand>
</feature>
<feature type="binding site" evidence="1">
    <location>
        <position position="138"/>
    </location>
    <ligand>
        <name>substrate</name>
    </ligand>
</feature>
<feature type="binding site" evidence="1">
    <location>
        <position position="148"/>
    </location>
    <ligand>
        <name>substrate</name>
    </ligand>
</feature>
<feature type="binding site" evidence="1">
    <location>
        <begin position="151"/>
        <end position="155"/>
    </location>
    <ligand>
        <name>NAD(+)</name>
        <dbReference type="ChEBI" id="CHEBI:57540"/>
    </ligand>
</feature>
<feature type="binding site" evidence="1">
    <location>
        <begin position="186"/>
        <end position="188"/>
    </location>
    <ligand>
        <name>NAD(+)</name>
        <dbReference type="ChEBI" id="CHEBI:57540"/>
    </ligand>
</feature>
<feature type="sequence conflict" description="In Ref. 1; AAB53027." evidence="5" ref="1">
    <original>A</original>
    <variation>T</variation>
    <location>
        <position position="146"/>
    </location>
</feature>
<reference key="1">
    <citation type="journal article" date="1997" name="Gene">
        <title>Cloning and expression of the cDNA for rat NAD+-dependent 15-hydroxyprostaglandin dehydrogenase.</title>
        <authorList>
            <person name="Zhang H."/>
            <person name="Matsuo M."/>
            <person name="Zhou H."/>
            <person name="Ensor C.M."/>
            <person name="Tai H.-H."/>
        </authorList>
    </citation>
    <scope>NUCLEOTIDE SEQUENCE [MRNA]</scope>
    <scope>FUNCTION</scope>
    <scope>CATALYTIC ACTIVITY</scope>
    <source>
        <tissue>Intestine</tissue>
    </source>
</reference>
<reference key="2">
    <citation type="journal article" date="2004" name="Genome Res.">
        <title>The status, quality, and expansion of the NIH full-length cDNA project: the Mammalian Gene Collection (MGC).</title>
        <authorList>
            <consortium name="The MGC Project Team"/>
        </authorList>
    </citation>
    <scope>NUCLEOTIDE SEQUENCE [LARGE SCALE MRNA]</scope>
    <source>
        <tissue>Prostate</tissue>
    </source>
</reference>
<dbReference type="EC" id="1.1.1.141" evidence="6"/>
<dbReference type="EC" id="1.1.1.-" evidence="2"/>
<dbReference type="EC" id="1.1.1.232" evidence="2"/>
<dbReference type="EMBL" id="U44750">
    <property type="protein sequence ID" value="AAB53027.1"/>
    <property type="molecule type" value="mRNA"/>
</dbReference>
<dbReference type="EMBL" id="BC062399">
    <property type="protein sequence ID" value="AAH62399.1"/>
    <property type="molecule type" value="mRNA"/>
</dbReference>
<dbReference type="RefSeq" id="NP_077366.2">
    <property type="nucleotide sequence ID" value="NM_024390.2"/>
</dbReference>
<dbReference type="SMR" id="O08699"/>
<dbReference type="FunCoup" id="O08699">
    <property type="interactions" value="569"/>
</dbReference>
<dbReference type="STRING" id="10116.ENSRNOP00000014229"/>
<dbReference type="BindingDB" id="O08699"/>
<dbReference type="iPTMnet" id="O08699"/>
<dbReference type="PhosphoSitePlus" id="O08699"/>
<dbReference type="PaxDb" id="10116-ENSRNOP00000014229"/>
<dbReference type="Ensembl" id="ENSRNOT00000014229.5">
    <property type="protein sequence ID" value="ENSRNOP00000014229.4"/>
    <property type="gene ID" value="ENSRNOG00000010610.5"/>
</dbReference>
<dbReference type="GeneID" id="79242"/>
<dbReference type="KEGG" id="rno:79242"/>
<dbReference type="UCSC" id="RGD:620087">
    <property type="organism name" value="rat"/>
</dbReference>
<dbReference type="AGR" id="RGD:620087"/>
<dbReference type="CTD" id="3248"/>
<dbReference type="RGD" id="620087">
    <property type="gene designation" value="Hpgd"/>
</dbReference>
<dbReference type="eggNOG" id="KOG4169">
    <property type="taxonomic scope" value="Eukaryota"/>
</dbReference>
<dbReference type="GeneTree" id="ENSGT00940000154593"/>
<dbReference type="HOGENOM" id="CLU_010194_2_16_1"/>
<dbReference type="InParanoid" id="O08699"/>
<dbReference type="OMA" id="RSHVICP"/>
<dbReference type="OrthoDB" id="37659at2759"/>
<dbReference type="PhylomeDB" id="O08699"/>
<dbReference type="TreeFam" id="TF324093"/>
<dbReference type="BRENDA" id="1.1.1.141">
    <property type="organism ID" value="5301"/>
</dbReference>
<dbReference type="Reactome" id="R-RNO-2142700">
    <property type="pathway name" value="Biosynthesis of Lipoxins (LX)"/>
</dbReference>
<dbReference type="Reactome" id="R-RNO-9018676">
    <property type="pathway name" value="Biosynthesis of D-series resolvins"/>
</dbReference>
<dbReference type="Reactome" id="R-RNO-9018896">
    <property type="pathway name" value="Biosynthesis of E-series 18(S)-resolvins"/>
</dbReference>
<dbReference type="SABIO-RK" id="O08699"/>
<dbReference type="PRO" id="PR:O08699"/>
<dbReference type="Proteomes" id="UP000002494">
    <property type="component" value="Chromosome 16"/>
</dbReference>
<dbReference type="Bgee" id="ENSRNOG00000010610">
    <property type="expression patterns" value="Expressed in duodenum and 19 other cell types or tissues"/>
</dbReference>
<dbReference type="GO" id="GO:0016323">
    <property type="term" value="C:basolateral plasma membrane"/>
    <property type="evidence" value="ECO:0000266"/>
    <property type="project" value="RGD"/>
</dbReference>
<dbReference type="GO" id="GO:0005737">
    <property type="term" value="C:cytoplasm"/>
    <property type="evidence" value="ECO:0000250"/>
    <property type="project" value="UniProtKB"/>
</dbReference>
<dbReference type="GO" id="GO:0005829">
    <property type="term" value="C:cytosol"/>
    <property type="evidence" value="ECO:0007669"/>
    <property type="project" value="Ensembl"/>
</dbReference>
<dbReference type="GO" id="GO:0005615">
    <property type="term" value="C:extracellular space"/>
    <property type="evidence" value="ECO:0000314"/>
    <property type="project" value="RGD"/>
</dbReference>
<dbReference type="GO" id="GO:0005654">
    <property type="term" value="C:nucleoplasm"/>
    <property type="evidence" value="ECO:0007669"/>
    <property type="project" value="Ensembl"/>
</dbReference>
<dbReference type="GO" id="GO:0016404">
    <property type="term" value="F:15-hydroxyprostaglandin dehydrogenase (NAD+) activity"/>
    <property type="evidence" value="ECO:0000314"/>
    <property type="project" value="RGD"/>
</dbReference>
<dbReference type="GO" id="GO:0042802">
    <property type="term" value="F:identical protein binding"/>
    <property type="evidence" value="ECO:0000353"/>
    <property type="project" value="RGD"/>
</dbReference>
<dbReference type="GO" id="GO:0051287">
    <property type="term" value="F:NAD binding"/>
    <property type="evidence" value="ECO:0000250"/>
    <property type="project" value="UniProtKB"/>
</dbReference>
<dbReference type="GO" id="GO:0070403">
    <property type="term" value="F:NAD+ binding"/>
    <property type="evidence" value="ECO:0000250"/>
    <property type="project" value="UniProtKB"/>
</dbReference>
<dbReference type="GO" id="GO:0016616">
    <property type="term" value="F:oxidoreductase activity, acting on the CH-OH group of donors, NAD or NADP as acceptor"/>
    <property type="evidence" value="ECO:0000266"/>
    <property type="project" value="RGD"/>
</dbReference>
<dbReference type="GO" id="GO:0004957">
    <property type="term" value="F:prostaglandin E receptor activity"/>
    <property type="evidence" value="ECO:0000250"/>
    <property type="project" value="UniProtKB"/>
</dbReference>
<dbReference type="GO" id="GO:0097070">
    <property type="term" value="P:ductus arteriosus closure"/>
    <property type="evidence" value="ECO:0000250"/>
    <property type="project" value="UniProtKB"/>
</dbReference>
<dbReference type="GO" id="GO:0007565">
    <property type="term" value="P:female pregnancy"/>
    <property type="evidence" value="ECO:0000270"/>
    <property type="project" value="RGD"/>
</dbReference>
<dbReference type="GO" id="GO:0001822">
    <property type="term" value="P:kidney development"/>
    <property type="evidence" value="ECO:0000270"/>
    <property type="project" value="RGD"/>
</dbReference>
<dbReference type="GO" id="GO:0045786">
    <property type="term" value="P:negative regulation of cell cycle"/>
    <property type="evidence" value="ECO:0000250"/>
    <property type="project" value="UniProtKB"/>
</dbReference>
<dbReference type="GO" id="GO:0030728">
    <property type="term" value="P:ovulation"/>
    <property type="evidence" value="ECO:0000250"/>
    <property type="project" value="UniProtKB"/>
</dbReference>
<dbReference type="GO" id="GO:0007567">
    <property type="term" value="P:parturition"/>
    <property type="evidence" value="ECO:0000250"/>
    <property type="project" value="UniProtKB"/>
</dbReference>
<dbReference type="GO" id="GO:0043065">
    <property type="term" value="P:positive regulation of apoptotic process"/>
    <property type="evidence" value="ECO:0000314"/>
    <property type="project" value="RGD"/>
</dbReference>
<dbReference type="GO" id="GO:1904707">
    <property type="term" value="P:positive regulation of vascular associated smooth muscle cell proliferation"/>
    <property type="evidence" value="ECO:0000315"/>
    <property type="project" value="RGD"/>
</dbReference>
<dbReference type="GO" id="GO:0006693">
    <property type="term" value="P:prostaglandin metabolic process"/>
    <property type="evidence" value="ECO:0000314"/>
    <property type="project" value="RGD"/>
</dbReference>
<dbReference type="GO" id="GO:1905828">
    <property type="term" value="P:regulation of prostaglandin catabolic process"/>
    <property type="evidence" value="ECO:0000250"/>
    <property type="project" value="UniProtKB"/>
</dbReference>
<dbReference type="GO" id="GO:0032355">
    <property type="term" value="P:response to estradiol"/>
    <property type="evidence" value="ECO:0000270"/>
    <property type="project" value="RGD"/>
</dbReference>
<dbReference type="GO" id="GO:0045471">
    <property type="term" value="P:response to ethanol"/>
    <property type="evidence" value="ECO:0000314"/>
    <property type="project" value="RGD"/>
</dbReference>
<dbReference type="GO" id="GO:0032496">
    <property type="term" value="P:response to lipopolysaccharide"/>
    <property type="evidence" value="ECO:0000270"/>
    <property type="project" value="RGD"/>
</dbReference>
<dbReference type="GO" id="GO:0070493">
    <property type="term" value="P:thrombin-activated receptor signaling pathway"/>
    <property type="evidence" value="ECO:0000270"/>
    <property type="project" value="UniProtKB"/>
</dbReference>
<dbReference type="GO" id="GO:0007179">
    <property type="term" value="P:transforming growth factor beta receptor signaling pathway"/>
    <property type="evidence" value="ECO:0000250"/>
    <property type="project" value="UniProtKB"/>
</dbReference>
<dbReference type="CDD" id="cd05323">
    <property type="entry name" value="ADH_SDR_c_like"/>
    <property type="match status" value="1"/>
</dbReference>
<dbReference type="FunFam" id="3.40.50.720:FF:000149">
    <property type="entry name" value="15-hydroxyprostaglandin dehydrogenase [NAD(+)]"/>
    <property type="match status" value="1"/>
</dbReference>
<dbReference type="Gene3D" id="3.40.50.720">
    <property type="entry name" value="NAD(P)-binding Rossmann-like Domain"/>
    <property type="match status" value="1"/>
</dbReference>
<dbReference type="InterPro" id="IPR036291">
    <property type="entry name" value="NAD(P)-bd_dom_sf"/>
</dbReference>
<dbReference type="InterPro" id="IPR020904">
    <property type="entry name" value="Sc_DH/Rdtase_CS"/>
</dbReference>
<dbReference type="InterPro" id="IPR002347">
    <property type="entry name" value="SDR_fam"/>
</dbReference>
<dbReference type="PANTHER" id="PTHR44229">
    <property type="entry name" value="15-HYDROXYPROSTAGLANDIN DEHYDROGENASE [NAD(+)]"/>
    <property type="match status" value="1"/>
</dbReference>
<dbReference type="PANTHER" id="PTHR44229:SF4">
    <property type="entry name" value="15-HYDROXYPROSTAGLANDIN DEHYDROGENASE [NAD(+)]"/>
    <property type="match status" value="1"/>
</dbReference>
<dbReference type="Pfam" id="PF00106">
    <property type="entry name" value="adh_short"/>
    <property type="match status" value="1"/>
</dbReference>
<dbReference type="PRINTS" id="PR00081">
    <property type="entry name" value="GDHRDH"/>
</dbReference>
<dbReference type="PRINTS" id="PR00080">
    <property type="entry name" value="SDRFAMILY"/>
</dbReference>
<dbReference type="SUPFAM" id="SSF51735">
    <property type="entry name" value="NAD(P)-binding Rossmann-fold domains"/>
    <property type="match status" value="1"/>
</dbReference>
<dbReference type="PROSITE" id="PS00061">
    <property type="entry name" value="ADH_SHORT"/>
    <property type="match status" value="1"/>
</dbReference>
<proteinExistence type="evidence at protein level"/>
<protein>
    <recommendedName>
        <fullName>15-hydroxyprostaglandin dehydrogenase [NAD(+)]</fullName>
        <shortName>15-PGDH</shortName>
        <ecNumber evidence="6">1.1.1.141</ecNumber>
    </recommendedName>
    <alternativeName>
        <fullName>Eicosanoid/docosanoid dehydrogenase [NAD(+)]</fullName>
        <ecNumber evidence="2">1.1.1.-</ecNumber>
        <ecNumber evidence="2">1.1.1.232</ecNumber>
    </alternativeName>
    <alternativeName>
        <fullName>Prostaglandin dehydrogenase 1</fullName>
    </alternativeName>
</protein>